<proteinExistence type="inferred from homology"/>
<name>SYL_BART1</name>
<protein>
    <recommendedName>
        <fullName evidence="1">Leucine--tRNA ligase</fullName>
        <ecNumber evidence="1">6.1.1.4</ecNumber>
    </recommendedName>
    <alternativeName>
        <fullName evidence="1">Leucyl-tRNA synthetase</fullName>
        <shortName evidence="1">LeuRS</shortName>
    </alternativeName>
</protein>
<reference key="1">
    <citation type="journal article" date="2007" name="Nat. Genet.">
        <title>Genomic analysis of Bartonella identifies type IV secretion systems as host adaptability factors.</title>
        <authorList>
            <person name="Saenz H.L."/>
            <person name="Engel P."/>
            <person name="Stoeckli M.C."/>
            <person name="Lanz C."/>
            <person name="Raddatz G."/>
            <person name="Vayssier-Taussat M."/>
            <person name="Birtles R."/>
            <person name="Schuster S.C."/>
            <person name="Dehio C."/>
        </authorList>
    </citation>
    <scope>NUCLEOTIDE SEQUENCE [LARGE SCALE GENOMIC DNA]</scope>
    <source>
        <strain>CIP 105476 / IBS 506</strain>
    </source>
</reference>
<comment type="catalytic activity">
    <reaction evidence="1">
        <text>tRNA(Leu) + L-leucine + ATP = L-leucyl-tRNA(Leu) + AMP + diphosphate</text>
        <dbReference type="Rhea" id="RHEA:11688"/>
        <dbReference type="Rhea" id="RHEA-COMP:9613"/>
        <dbReference type="Rhea" id="RHEA-COMP:9622"/>
        <dbReference type="ChEBI" id="CHEBI:30616"/>
        <dbReference type="ChEBI" id="CHEBI:33019"/>
        <dbReference type="ChEBI" id="CHEBI:57427"/>
        <dbReference type="ChEBI" id="CHEBI:78442"/>
        <dbReference type="ChEBI" id="CHEBI:78494"/>
        <dbReference type="ChEBI" id="CHEBI:456215"/>
        <dbReference type="EC" id="6.1.1.4"/>
    </reaction>
</comment>
<comment type="subcellular location">
    <subcellularLocation>
        <location evidence="1">Cytoplasm</location>
    </subcellularLocation>
</comment>
<comment type="similarity">
    <text evidence="1">Belongs to the class-I aminoacyl-tRNA synthetase family.</text>
</comment>
<accession>A9IYY8</accession>
<evidence type="ECO:0000255" key="1">
    <source>
        <dbReference type="HAMAP-Rule" id="MF_00049"/>
    </source>
</evidence>
<organism>
    <name type="scientific">Bartonella tribocorum (strain CIP 105476 / IBS 506)</name>
    <dbReference type="NCBI Taxonomy" id="382640"/>
    <lineage>
        <taxon>Bacteria</taxon>
        <taxon>Pseudomonadati</taxon>
        <taxon>Pseudomonadota</taxon>
        <taxon>Alphaproteobacteria</taxon>
        <taxon>Hyphomicrobiales</taxon>
        <taxon>Bartonellaceae</taxon>
        <taxon>Bartonella</taxon>
    </lineage>
</organism>
<feature type="chain" id="PRO_0000334731" description="Leucine--tRNA ligase">
    <location>
        <begin position="1"/>
        <end position="886"/>
    </location>
</feature>
<feature type="short sequence motif" description="'HIGH' region">
    <location>
        <begin position="51"/>
        <end position="61"/>
    </location>
</feature>
<feature type="short sequence motif" description="'KMSKS' region">
    <location>
        <begin position="644"/>
        <end position="648"/>
    </location>
</feature>
<feature type="binding site" evidence="1">
    <location>
        <position position="647"/>
    </location>
    <ligand>
        <name>ATP</name>
        <dbReference type="ChEBI" id="CHEBI:30616"/>
    </ligand>
</feature>
<dbReference type="EC" id="6.1.1.4" evidence="1"/>
<dbReference type="EMBL" id="AM260525">
    <property type="protein sequence ID" value="CAK02453.1"/>
    <property type="molecule type" value="Genomic_DNA"/>
</dbReference>
<dbReference type="SMR" id="A9IYY8"/>
<dbReference type="KEGG" id="btr:BT_2478"/>
<dbReference type="eggNOG" id="COG0495">
    <property type="taxonomic scope" value="Bacteria"/>
</dbReference>
<dbReference type="HOGENOM" id="CLU_004427_0_0_5"/>
<dbReference type="Proteomes" id="UP000001592">
    <property type="component" value="Chromosome"/>
</dbReference>
<dbReference type="GO" id="GO:0005829">
    <property type="term" value="C:cytosol"/>
    <property type="evidence" value="ECO:0007669"/>
    <property type="project" value="TreeGrafter"/>
</dbReference>
<dbReference type="GO" id="GO:0002161">
    <property type="term" value="F:aminoacyl-tRNA deacylase activity"/>
    <property type="evidence" value="ECO:0007669"/>
    <property type="project" value="InterPro"/>
</dbReference>
<dbReference type="GO" id="GO:0005524">
    <property type="term" value="F:ATP binding"/>
    <property type="evidence" value="ECO:0007669"/>
    <property type="project" value="UniProtKB-UniRule"/>
</dbReference>
<dbReference type="GO" id="GO:0004823">
    <property type="term" value="F:leucine-tRNA ligase activity"/>
    <property type="evidence" value="ECO:0007669"/>
    <property type="project" value="UniProtKB-UniRule"/>
</dbReference>
<dbReference type="GO" id="GO:0006429">
    <property type="term" value="P:leucyl-tRNA aminoacylation"/>
    <property type="evidence" value="ECO:0007669"/>
    <property type="project" value="UniProtKB-UniRule"/>
</dbReference>
<dbReference type="CDD" id="cd07958">
    <property type="entry name" value="Anticodon_Ia_Leu_BEm"/>
    <property type="match status" value="1"/>
</dbReference>
<dbReference type="CDD" id="cd00812">
    <property type="entry name" value="LeuRS_core"/>
    <property type="match status" value="1"/>
</dbReference>
<dbReference type="FunFam" id="1.10.730.10:FF:000002">
    <property type="entry name" value="Leucine--tRNA ligase"/>
    <property type="match status" value="1"/>
</dbReference>
<dbReference type="FunFam" id="3.40.50.620:FF:000003">
    <property type="entry name" value="Leucine--tRNA ligase"/>
    <property type="match status" value="1"/>
</dbReference>
<dbReference type="Gene3D" id="2.20.28.290">
    <property type="match status" value="1"/>
</dbReference>
<dbReference type="Gene3D" id="3.10.20.590">
    <property type="match status" value="1"/>
</dbReference>
<dbReference type="Gene3D" id="3.40.50.620">
    <property type="entry name" value="HUPs"/>
    <property type="match status" value="2"/>
</dbReference>
<dbReference type="Gene3D" id="1.10.730.10">
    <property type="entry name" value="Isoleucyl-tRNA Synthetase, Domain 1"/>
    <property type="match status" value="1"/>
</dbReference>
<dbReference type="Gene3D" id="3.90.740.10">
    <property type="entry name" value="Valyl/Leucyl/Isoleucyl-tRNA synthetase, editing domain"/>
    <property type="match status" value="1"/>
</dbReference>
<dbReference type="HAMAP" id="MF_00049_B">
    <property type="entry name" value="Leu_tRNA_synth_B"/>
    <property type="match status" value="1"/>
</dbReference>
<dbReference type="InterPro" id="IPR001412">
    <property type="entry name" value="aa-tRNA-synth_I_CS"/>
</dbReference>
<dbReference type="InterPro" id="IPR002300">
    <property type="entry name" value="aa-tRNA-synth_Ia"/>
</dbReference>
<dbReference type="InterPro" id="IPR002302">
    <property type="entry name" value="Leu-tRNA-ligase"/>
</dbReference>
<dbReference type="InterPro" id="IPR025709">
    <property type="entry name" value="Leu_tRNA-synth_edit"/>
</dbReference>
<dbReference type="InterPro" id="IPR013155">
    <property type="entry name" value="M/V/L/I-tRNA-synth_anticd-bd"/>
</dbReference>
<dbReference type="InterPro" id="IPR015413">
    <property type="entry name" value="Methionyl/Leucyl_tRNA_Synth"/>
</dbReference>
<dbReference type="InterPro" id="IPR014729">
    <property type="entry name" value="Rossmann-like_a/b/a_fold"/>
</dbReference>
<dbReference type="InterPro" id="IPR009080">
    <property type="entry name" value="tRNAsynth_Ia_anticodon-bd"/>
</dbReference>
<dbReference type="InterPro" id="IPR009008">
    <property type="entry name" value="Val/Leu/Ile-tRNA-synth_edit"/>
</dbReference>
<dbReference type="NCBIfam" id="TIGR00396">
    <property type="entry name" value="leuS_bact"/>
    <property type="match status" value="1"/>
</dbReference>
<dbReference type="PANTHER" id="PTHR43740:SF2">
    <property type="entry name" value="LEUCINE--TRNA LIGASE, MITOCHONDRIAL"/>
    <property type="match status" value="1"/>
</dbReference>
<dbReference type="PANTHER" id="PTHR43740">
    <property type="entry name" value="LEUCYL-TRNA SYNTHETASE"/>
    <property type="match status" value="1"/>
</dbReference>
<dbReference type="Pfam" id="PF08264">
    <property type="entry name" value="Anticodon_1"/>
    <property type="match status" value="1"/>
</dbReference>
<dbReference type="Pfam" id="PF00133">
    <property type="entry name" value="tRNA-synt_1"/>
    <property type="match status" value="2"/>
</dbReference>
<dbReference type="Pfam" id="PF13603">
    <property type="entry name" value="tRNA-synt_1_2"/>
    <property type="match status" value="1"/>
</dbReference>
<dbReference type="Pfam" id="PF09334">
    <property type="entry name" value="tRNA-synt_1g"/>
    <property type="match status" value="1"/>
</dbReference>
<dbReference type="PRINTS" id="PR00985">
    <property type="entry name" value="TRNASYNTHLEU"/>
</dbReference>
<dbReference type="SUPFAM" id="SSF47323">
    <property type="entry name" value="Anticodon-binding domain of a subclass of class I aminoacyl-tRNA synthetases"/>
    <property type="match status" value="1"/>
</dbReference>
<dbReference type="SUPFAM" id="SSF52374">
    <property type="entry name" value="Nucleotidylyl transferase"/>
    <property type="match status" value="1"/>
</dbReference>
<dbReference type="SUPFAM" id="SSF50677">
    <property type="entry name" value="ValRS/IleRS/LeuRS editing domain"/>
    <property type="match status" value="1"/>
</dbReference>
<dbReference type="PROSITE" id="PS00178">
    <property type="entry name" value="AA_TRNA_LIGASE_I"/>
    <property type="match status" value="1"/>
</dbReference>
<sequence>MGMTIEHYKIGERYNPRAREKKWQEIWDEKKIFQTVQGDGREKYYVLEMFPYPSGRIHMGHVRNYAMGDVVARYKRAKGFNVLHPMGWDAFGMPAENAALQSKVHPKTWTYENIAVMRGQLKQLGLSLDWAREFATCDVDYYHRQQMLFLDFYQKGLVARKVAKVNWDPVDHTVLANEQVVDGRGWRSGALVEQRELTQWFFKISDFSEDLLAGLEELDQWPEKVRTMQKNWIGKSQGLLIRWALKSTADDAGGSNDVCEAFDEVVCYSTRPDTLFGASFLALSVDHPIAQSLAKKDKALAAFIENCRCGGTTTAALETAEKQGFLTPLVAVHPFDETVHIPVYIANFVLMDYGTGAIFGCPAHDQRDFDFARKYDLPIKPVVLPRETKVEDFVLAEMPYTGDGVMINSSFLDGLTPQQAFEEVAKRLEQQVLHGQPQGKKTVQFRLRDWGISRQRYWGCPIPMIHCTSCGVVPVPRADLPVVLPDDVTFDQPGNPLARHEMWQDVACPICGQPAKRETDTMDTFVDSSWYYARFTAPFAPEPVEKQATAEWLPVQQYIGGIEHAILHLLYARFFMRAMKLVGHVSVDEPFKGLFTQGMVVHETYRDDQGWVSPAEISIVEKDGKRCAYKLTDQSEVTIGLIEKMSKSKKNVVDPDDIIASYGADTVRWFVLSDSPPERDVIWTESGVEGAHRFVQRVWRHVALSAAVLKDVAPRAGHQGAALELSKAAHRMLHAVEDDLEKFAFNRAIARLYEFLNIMAPLLNKVADVEDEMKAALRQAMDFFLAMIAPIMPHLAEECHAALGETTLMSELAWPVYDPALIVEESYTLPVQINGKKRGEVTVAATASETMIKEAVLALDFVQAQLVEKPMKKIIIVPQRIVNVVL</sequence>
<keyword id="KW-0030">Aminoacyl-tRNA synthetase</keyword>
<keyword id="KW-0067">ATP-binding</keyword>
<keyword id="KW-0963">Cytoplasm</keyword>
<keyword id="KW-0436">Ligase</keyword>
<keyword id="KW-0547">Nucleotide-binding</keyword>
<keyword id="KW-0648">Protein biosynthesis</keyword>
<gene>
    <name evidence="1" type="primary">leuS</name>
    <name type="ordered locus">BT_2478</name>
</gene>